<protein>
    <recommendedName>
        <fullName evidence="1">tRNA-2-methylthio-N(6)-dimethylallyladenosine synthase</fullName>
        <ecNumber evidence="1">2.8.4.3</ecNumber>
    </recommendedName>
    <alternativeName>
        <fullName evidence="1">(Dimethylallyl)adenosine tRNA methylthiotransferase MiaB</fullName>
    </alternativeName>
    <alternativeName>
        <fullName evidence="1">tRNA-i(6)A37 methylthiotransferase</fullName>
    </alternativeName>
</protein>
<keyword id="KW-0004">4Fe-4S</keyword>
<keyword id="KW-0963">Cytoplasm</keyword>
<keyword id="KW-0408">Iron</keyword>
<keyword id="KW-0411">Iron-sulfur</keyword>
<keyword id="KW-0479">Metal-binding</keyword>
<keyword id="KW-0949">S-adenosyl-L-methionine</keyword>
<keyword id="KW-0808">Transferase</keyword>
<keyword id="KW-0819">tRNA processing</keyword>
<comment type="function">
    <text evidence="1">Catalyzes the methylthiolation of N6-(dimethylallyl)adenosine (i(6)A), leading to the formation of 2-methylthio-N6-(dimethylallyl)adenosine (ms(2)i(6)A) at position 37 in tRNAs that read codons beginning with uridine.</text>
</comment>
<comment type="catalytic activity">
    <reaction evidence="1">
        <text>N(6)-dimethylallyladenosine(37) in tRNA + (sulfur carrier)-SH + AH2 + 2 S-adenosyl-L-methionine = 2-methylsulfanyl-N(6)-dimethylallyladenosine(37) in tRNA + (sulfur carrier)-H + 5'-deoxyadenosine + L-methionine + A + S-adenosyl-L-homocysteine + 2 H(+)</text>
        <dbReference type="Rhea" id="RHEA:37067"/>
        <dbReference type="Rhea" id="RHEA-COMP:10375"/>
        <dbReference type="Rhea" id="RHEA-COMP:10376"/>
        <dbReference type="Rhea" id="RHEA-COMP:14737"/>
        <dbReference type="Rhea" id="RHEA-COMP:14739"/>
        <dbReference type="ChEBI" id="CHEBI:13193"/>
        <dbReference type="ChEBI" id="CHEBI:15378"/>
        <dbReference type="ChEBI" id="CHEBI:17319"/>
        <dbReference type="ChEBI" id="CHEBI:17499"/>
        <dbReference type="ChEBI" id="CHEBI:29917"/>
        <dbReference type="ChEBI" id="CHEBI:57844"/>
        <dbReference type="ChEBI" id="CHEBI:57856"/>
        <dbReference type="ChEBI" id="CHEBI:59789"/>
        <dbReference type="ChEBI" id="CHEBI:64428"/>
        <dbReference type="ChEBI" id="CHEBI:74415"/>
        <dbReference type="ChEBI" id="CHEBI:74417"/>
        <dbReference type="EC" id="2.8.4.3"/>
    </reaction>
</comment>
<comment type="cofactor">
    <cofactor evidence="1">
        <name>[4Fe-4S] cluster</name>
        <dbReference type="ChEBI" id="CHEBI:49883"/>
    </cofactor>
    <text evidence="1">Binds 2 [4Fe-4S] clusters. One cluster is coordinated with 3 cysteines and an exchangeable S-adenosyl-L-methionine.</text>
</comment>
<comment type="subunit">
    <text evidence="1">Monomer.</text>
</comment>
<comment type="subcellular location">
    <subcellularLocation>
        <location evidence="1">Cytoplasm</location>
    </subcellularLocation>
</comment>
<comment type="similarity">
    <text evidence="1">Belongs to the methylthiotransferase family. MiaB subfamily.</text>
</comment>
<proteinExistence type="inferred from homology"/>
<accession>A1RGV4</accession>
<feature type="chain" id="PRO_0000374548" description="tRNA-2-methylthio-N(6)-dimethylallyladenosine synthase">
    <location>
        <begin position="1"/>
        <end position="474"/>
    </location>
</feature>
<feature type="domain" description="MTTase N-terminal" evidence="1">
    <location>
        <begin position="3"/>
        <end position="120"/>
    </location>
</feature>
<feature type="domain" description="Radical SAM core" evidence="2">
    <location>
        <begin position="143"/>
        <end position="375"/>
    </location>
</feature>
<feature type="domain" description="TRAM" evidence="1">
    <location>
        <begin position="378"/>
        <end position="441"/>
    </location>
</feature>
<feature type="binding site" evidence="1">
    <location>
        <position position="12"/>
    </location>
    <ligand>
        <name>[4Fe-4S] cluster</name>
        <dbReference type="ChEBI" id="CHEBI:49883"/>
        <label>1</label>
    </ligand>
</feature>
<feature type="binding site" evidence="1">
    <location>
        <position position="49"/>
    </location>
    <ligand>
        <name>[4Fe-4S] cluster</name>
        <dbReference type="ChEBI" id="CHEBI:49883"/>
        <label>1</label>
    </ligand>
</feature>
<feature type="binding site" evidence="1">
    <location>
        <position position="83"/>
    </location>
    <ligand>
        <name>[4Fe-4S] cluster</name>
        <dbReference type="ChEBI" id="CHEBI:49883"/>
        <label>1</label>
    </ligand>
</feature>
<feature type="binding site" evidence="1">
    <location>
        <position position="157"/>
    </location>
    <ligand>
        <name>[4Fe-4S] cluster</name>
        <dbReference type="ChEBI" id="CHEBI:49883"/>
        <label>2</label>
        <note>4Fe-4S-S-AdoMet</note>
    </ligand>
</feature>
<feature type="binding site" evidence="1">
    <location>
        <position position="161"/>
    </location>
    <ligand>
        <name>[4Fe-4S] cluster</name>
        <dbReference type="ChEBI" id="CHEBI:49883"/>
        <label>2</label>
        <note>4Fe-4S-S-AdoMet</note>
    </ligand>
</feature>
<feature type="binding site" evidence="1">
    <location>
        <position position="164"/>
    </location>
    <ligand>
        <name>[4Fe-4S] cluster</name>
        <dbReference type="ChEBI" id="CHEBI:49883"/>
        <label>2</label>
        <note>4Fe-4S-S-AdoMet</note>
    </ligand>
</feature>
<name>MIAB_SHESW</name>
<gene>
    <name evidence="1" type="primary">miaB</name>
    <name type="ordered locus">Sputw3181_1049</name>
</gene>
<evidence type="ECO:0000255" key="1">
    <source>
        <dbReference type="HAMAP-Rule" id="MF_01864"/>
    </source>
</evidence>
<evidence type="ECO:0000255" key="2">
    <source>
        <dbReference type="PROSITE-ProRule" id="PRU01266"/>
    </source>
</evidence>
<sequence>MSKKLHIKTWGCQMNEYDSSKMADLLGEYQGYTLTEDASEADILLLNTCSIREKAQEKVFHQLGRWKTLKDKNPNLIIGVGGCVASQEGKAIKDRAQCVDIIFGPQTLHRLPDMIEQVRRGDKAVIDISFPEIEKFDRLPEPRAEGPTAFVSIMEGCSKYCSFCVVPYTRGEEVSRPLDDIILEIAQLAEQGVREVNLLGQNVNAYRGATHDGSICSFAELLRFVAAIDGIDRIRFTTSHPIEFTQDIIDVYEDTPELVSFLHLPVQSGSDRILTAMKRGHMAIEYKSIIRRLRKAREGIQISSDFIIGFPGETKEDFADTMKLIEEIGFDHSFSFIYSARPGTPAADLPDNVDMEEKKQRLAILQDRITQQAMRYSRHMMGTVQRILVEGPSVKNPMELRGRTENNRVVNFEGLPKHIGTFVDVEIVDVYTNSLRGKFIRGEDEMDLRRSLRPAEILAKRKQDDELGVTQFKP</sequence>
<organism>
    <name type="scientific">Shewanella sp. (strain W3-18-1)</name>
    <dbReference type="NCBI Taxonomy" id="351745"/>
    <lineage>
        <taxon>Bacteria</taxon>
        <taxon>Pseudomonadati</taxon>
        <taxon>Pseudomonadota</taxon>
        <taxon>Gammaproteobacteria</taxon>
        <taxon>Alteromonadales</taxon>
        <taxon>Shewanellaceae</taxon>
        <taxon>Shewanella</taxon>
    </lineage>
</organism>
<reference key="1">
    <citation type="submission" date="2006-12" db="EMBL/GenBank/DDBJ databases">
        <title>Complete sequence of Shewanella sp. W3-18-1.</title>
        <authorList>
            <consortium name="US DOE Joint Genome Institute"/>
            <person name="Copeland A."/>
            <person name="Lucas S."/>
            <person name="Lapidus A."/>
            <person name="Barry K."/>
            <person name="Detter J.C."/>
            <person name="Glavina del Rio T."/>
            <person name="Hammon N."/>
            <person name="Israni S."/>
            <person name="Dalin E."/>
            <person name="Tice H."/>
            <person name="Pitluck S."/>
            <person name="Chain P."/>
            <person name="Malfatti S."/>
            <person name="Shin M."/>
            <person name="Vergez L."/>
            <person name="Schmutz J."/>
            <person name="Larimer F."/>
            <person name="Land M."/>
            <person name="Hauser L."/>
            <person name="Kyrpides N."/>
            <person name="Lykidis A."/>
            <person name="Tiedje J."/>
            <person name="Richardson P."/>
        </authorList>
    </citation>
    <scope>NUCLEOTIDE SEQUENCE [LARGE SCALE GENOMIC DNA]</scope>
    <source>
        <strain>W3-18-1</strain>
    </source>
</reference>
<dbReference type="EC" id="2.8.4.3" evidence="1"/>
<dbReference type="EMBL" id="CP000503">
    <property type="protein sequence ID" value="ABM23899.1"/>
    <property type="molecule type" value="Genomic_DNA"/>
</dbReference>
<dbReference type="RefSeq" id="WP_011788424.1">
    <property type="nucleotide sequence ID" value="NC_008750.1"/>
</dbReference>
<dbReference type="SMR" id="A1RGV4"/>
<dbReference type="GeneID" id="67444477"/>
<dbReference type="KEGG" id="shw:Sputw3181_1049"/>
<dbReference type="HOGENOM" id="CLU_018697_2_0_6"/>
<dbReference type="Proteomes" id="UP000002597">
    <property type="component" value="Chromosome"/>
</dbReference>
<dbReference type="GO" id="GO:0005829">
    <property type="term" value="C:cytosol"/>
    <property type="evidence" value="ECO:0007669"/>
    <property type="project" value="TreeGrafter"/>
</dbReference>
<dbReference type="GO" id="GO:0051539">
    <property type="term" value="F:4 iron, 4 sulfur cluster binding"/>
    <property type="evidence" value="ECO:0007669"/>
    <property type="project" value="UniProtKB-UniRule"/>
</dbReference>
<dbReference type="GO" id="GO:0046872">
    <property type="term" value="F:metal ion binding"/>
    <property type="evidence" value="ECO:0007669"/>
    <property type="project" value="UniProtKB-KW"/>
</dbReference>
<dbReference type="GO" id="GO:0035597">
    <property type="term" value="F:N6-isopentenyladenosine methylthiotransferase activity"/>
    <property type="evidence" value="ECO:0007669"/>
    <property type="project" value="TreeGrafter"/>
</dbReference>
<dbReference type="CDD" id="cd01335">
    <property type="entry name" value="Radical_SAM"/>
    <property type="match status" value="1"/>
</dbReference>
<dbReference type="FunFam" id="3.40.50.12160:FF:000001">
    <property type="entry name" value="tRNA-2-methylthio-N(6)-dimethylallyladenosine synthase"/>
    <property type="match status" value="1"/>
</dbReference>
<dbReference type="FunFam" id="3.80.30.20:FF:000001">
    <property type="entry name" value="tRNA-2-methylthio-N(6)-dimethylallyladenosine synthase 2"/>
    <property type="match status" value="1"/>
</dbReference>
<dbReference type="Gene3D" id="3.40.50.12160">
    <property type="entry name" value="Methylthiotransferase, N-terminal domain"/>
    <property type="match status" value="1"/>
</dbReference>
<dbReference type="Gene3D" id="3.80.30.20">
    <property type="entry name" value="tm_1862 like domain"/>
    <property type="match status" value="1"/>
</dbReference>
<dbReference type="HAMAP" id="MF_01864">
    <property type="entry name" value="tRNA_metthiotr_MiaB"/>
    <property type="match status" value="1"/>
</dbReference>
<dbReference type="InterPro" id="IPR006638">
    <property type="entry name" value="Elp3/MiaA/NifB-like_rSAM"/>
</dbReference>
<dbReference type="InterPro" id="IPR005839">
    <property type="entry name" value="Methylthiotransferase"/>
</dbReference>
<dbReference type="InterPro" id="IPR020612">
    <property type="entry name" value="Methylthiotransferase_CS"/>
</dbReference>
<dbReference type="InterPro" id="IPR013848">
    <property type="entry name" value="Methylthiotransferase_N"/>
</dbReference>
<dbReference type="InterPro" id="IPR038135">
    <property type="entry name" value="Methylthiotransferase_N_sf"/>
</dbReference>
<dbReference type="InterPro" id="IPR006463">
    <property type="entry name" value="MiaB_methiolase"/>
</dbReference>
<dbReference type="InterPro" id="IPR007197">
    <property type="entry name" value="rSAM"/>
</dbReference>
<dbReference type="InterPro" id="IPR023404">
    <property type="entry name" value="rSAM_horseshoe"/>
</dbReference>
<dbReference type="InterPro" id="IPR002792">
    <property type="entry name" value="TRAM_dom"/>
</dbReference>
<dbReference type="NCBIfam" id="TIGR01574">
    <property type="entry name" value="miaB-methiolase"/>
    <property type="match status" value="1"/>
</dbReference>
<dbReference type="NCBIfam" id="TIGR00089">
    <property type="entry name" value="MiaB/RimO family radical SAM methylthiotransferase"/>
    <property type="match status" value="1"/>
</dbReference>
<dbReference type="PANTHER" id="PTHR43020">
    <property type="entry name" value="CDK5 REGULATORY SUBUNIT-ASSOCIATED PROTEIN 1"/>
    <property type="match status" value="1"/>
</dbReference>
<dbReference type="PANTHER" id="PTHR43020:SF2">
    <property type="entry name" value="MITOCHONDRIAL TRNA METHYLTHIOTRANSFERASE CDK5RAP1"/>
    <property type="match status" value="1"/>
</dbReference>
<dbReference type="Pfam" id="PF04055">
    <property type="entry name" value="Radical_SAM"/>
    <property type="match status" value="1"/>
</dbReference>
<dbReference type="Pfam" id="PF01938">
    <property type="entry name" value="TRAM"/>
    <property type="match status" value="1"/>
</dbReference>
<dbReference type="Pfam" id="PF00919">
    <property type="entry name" value="UPF0004"/>
    <property type="match status" value="1"/>
</dbReference>
<dbReference type="SFLD" id="SFLDF00273">
    <property type="entry name" value="(dimethylallyl)adenosine_tRNA"/>
    <property type="match status" value="1"/>
</dbReference>
<dbReference type="SFLD" id="SFLDG01082">
    <property type="entry name" value="B12-binding_domain_containing"/>
    <property type="match status" value="1"/>
</dbReference>
<dbReference type="SFLD" id="SFLDG01061">
    <property type="entry name" value="methylthiotransferase"/>
    <property type="match status" value="1"/>
</dbReference>
<dbReference type="SMART" id="SM00729">
    <property type="entry name" value="Elp3"/>
    <property type="match status" value="1"/>
</dbReference>
<dbReference type="SUPFAM" id="SSF102114">
    <property type="entry name" value="Radical SAM enzymes"/>
    <property type="match status" value="1"/>
</dbReference>
<dbReference type="PROSITE" id="PS51449">
    <property type="entry name" value="MTTASE_N"/>
    <property type="match status" value="1"/>
</dbReference>
<dbReference type="PROSITE" id="PS01278">
    <property type="entry name" value="MTTASE_RADICAL"/>
    <property type="match status" value="1"/>
</dbReference>
<dbReference type="PROSITE" id="PS51918">
    <property type="entry name" value="RADICAL_SAM"/>
    <property type="match status" value="1"/>
</dbReference>
<dbReference type="PROSITE" id="PS50926">
    <property type="entry name" value="TRAM"/>
    <property type="match status" value="1"/>
</dbReference>